<name>CYC_AQUCT</name>
<feature type="initiator methionine" description="Removed" evidence="3">
    <location>
        <position position="1"/>
    </location>
</feature>
<feature type="chain" id="PRO_0000108256" description="Cytochrome c">
    <location>
        <begin position="2"/>
        <end position="105"/>
    </location>
</feature>
<feature type="binding site" description="covalent" evidence="1">
    <location>
        <position position="15"/>
    </location>
    <ligand>
        <name>heme c</name>
        <dbReference type="ChEBI" id="CHEBI:61717"/>
    </ligand>
</feature>
<feature type="binding site" description="covalent" evidence="1">
    <location>
        <position position="18"/>
    </location>
    <ligand>
        <name>heme c</name>
        <dbReference type="ChEBI" id="CHEBI:61717"/>
    </ligand>
</feature>
<feature type="binding site" description="axial binding residue" evidence="1">
    <location>
        <position position="19"/>
    </location>
    <ligand>
        <name>heme c</name>
        <dbReference type="ChEBI" id="CHEBI:61717"/>
    </ligand>
    <ligandPart>
        <name>Fe</name>
        <dbReference type="ChEBI" id="CHEBI:18248"/>
    </ligandPart>
</feature>
<feature type="binding site" description="axial binding residue" evidence="1">
    <location>
        <position position="81"/>
    </location>
    <ligand>
        <name>heme c</name>
        <dbReference type="ChEBI" id="CHEBI:61717"/>
    </ligand>
    <ligandPart>
        <name>Fe</name>
        <dbReference type="ChEBI" id="CHEBI:18248"/>
    </ligandPart>
</feature>
<feature type="modified residue" description="N-acetylglycine" evidence="3">
    <location>
        <position position="2"/>
    </location>
</feature>
<feature type="disulfide bond">
    <location>
        <begin position="21"/>
        <end position="103"/>
    </location>
</feature>
<feature type="unsure residue">
    <location>
        <begin position="13"/>
        <end position="27"/>
    </location>
</feature>
<feature type="unsure residue">
    <location>
        <begin position="61"/>
        <end position="68"/>
    </location>
</feature>
<feature type="unsure residue">
    <location>
        <begin position="87"/>
        <end position="93"/>
    </location>
</feature>
<feature type="unsure residue">
    <location>
        <begin position="99"/>
        <end position="105"/>
    </location>
</feature>
<proteinExistence type="evidence at protein level"/>
<dbReference type="PIR" id="A00021">
    <property type="entry name" value="CCFG"/>
</dbReference>
<dbReference type="SMR" id="P00024"/>
<dbReference type="GO" id="GO:0005758">
    <property type="term" value="C:mitochondrial intermembrane space"/>
    <property type="evidence" value="ECO:0007669"/>
    <property type="project" value="UniProtKB-SubCell"/>
</dbReference>
<dbReference type="GO" id="GO:0009055">
    <property type="term" value="F:electron transfer activity"/>
    <property type="evidence" value="ECO:0007669"/>
    <property type="project" value="InterPro"/>
</dbReference>
<dbReference type="GO" id="GO:0020037">
    <property type="term" value="F:heme binding"/>
    <property type="evidence" value="ECO:0007669"/>
    <property type="project" value="InterPro"/>
</dbReference>
<dbReference type="GO" id="GO:0046872">
    <property type="term" value="F:metal ion binding"/>
    <property type="evidence" value="ECO:0007669"/>
    <property type="project" value="UniProtKB-KW"/>
</dbReference>
<dbReference type="FunFam" id="1.10.760.10:FF:000008">
    <property type="entry name" value="Cytochrome c"/>
    <property type="match status" value="1"/>
</dbReference>
<dbReference type="Gene3D" id="1.10.760.10">
    <property type="entry name" value="Cytochrome c-like domain"/>
    <property type="match status" value="1"/>
</dbReference>
<dbReference type="InterPro" id="IPR009056">
    <property type="entry name" value="Cyt_c-like_dom"/>
</dbReference>
<dbReference type="InterPro" id="IPR036909">
    <property type="entry name" value="Cyt_c-like_dom_sf"/>
</dbReference>
<dbReference type="InterPro" id="IPR002327">
    <property type="entry name" value="Cyt_c_1A/1B"/>
</dbReference>
<dbReference type="PANTHER" id="PTHR11961">
    <property type="entry name" value="CYTOCHROME C"/>
    <property type="match status" value="1"/>
</dbReference>
<dbReference type="Pfam" id="PF00034">
    <property type="entry name" value="Cytochrom_C"/>
    <property type="match status" value="1"/>
</dbReference>
<dbReference type="PRINTS" id="PR00604">
    <property type="entry name" value="CYTCHRMECIAB"/>
</dbReference>
<dbReference type="SUPFAM" id="SSF46626">
    <property type="entry name" value="Cytochrome c"/>
    <property type="match status" value="1"/>
</dbReference>
<dbReference type="PROSITE" id="PS51007">
    <property type="entry name" value="CYTC"/>
    <property type="match status" value="1"/>
</dbReference>
<protein>
    <recommendedName>
        <fullName>Cytochrome c</fullName>
    </recommendedName>
</protein>
<accession>P00024</accession>
<sequence length="105" mass="11590">MGDVEKGKKIFVQKCAQCHTCEKGGKHKVGPNLYGLIGRKTGQAAGFSYTDANKNKGITWGEDTLMEYLENPKKYIPGTKMIFAGIKKKGERQDLIAYLKSACSK</sequence>
<organism>
    <name type="scientific">Aquarana catesbeiana</name>
    <name type="common">American bullfrog</name>
    <name type="synonym">Rana catesbeiana</name>
    <dbReference type="NCBI Taxonomy" id="8400"/>
    <lineage>
        <taxon>Eukaryota</taxon>
        <taxon>Metazoa</taxon>
        <taxon>Chordata</taxon>
        <taxon>Craniata</taxon>
        <taxon>Vertebrata</taxon>
        <taxon>Euteleostomi</taxon>
        <taxon>Amphibia</taxon>
        <taxon>Batrachia</taxon>
        <taxon>Anura</taxon>
        <taxon>Neobatrachia</taxon>
        <taxon>Ranoidea</taxon>
        <taxon>Ranidae</taxon>
        <taxon>Aquarana</taxon>
    </lineage>
</organism>
<reference key="1">
    <citation type="submission" date="1967-07" db="PIR data bank">
        <authorList>
            <person name="Chan S.K."/>
            <person name="Walasek O.F."/>
            <person name="Barlow G.H."/>
            <person name="Margoliash E."/>
        </authorList>
    </citation>
    <scope>PROTEIN SEQUENCE OF 2-105</scope>
    <scope>ACETYLATION AT GLY-2</scope>
</reference>
<comment type="function">
    <text>Electron carrier protein. The oxidized form of the cytochrome c heme group can accept an electron from the heme group of the cytochrome c1 subunit of cytochrome reductase. Cytochrome c then transfers this electron to the cytochrome oxidase complex, the final protein carrier in the mitochondrial electron-transport chain.</text>
</comment>
<comment type="subcellular location">
    <subcellularLocation>
        <location>Mitochondrion intermembrane space</location>
    </subcellularLocation>
    <text>Loosely associated with the inner membrane.</text>
</comment>
<comment type="PTM">
    <text>Binds 1 heme c group covalently per subunit.</text>
</comment>
<comment type="similarity">
    <text evidence="2">Belongs to the cytochrome c family.</text>
</comment>
<comment type="caution">
    <text evidence="2">The positions of the amino acids 89-93 were arranged by homology with other cytochrome c sequences. This order differs from that submitted to PIR by Chan et al. The presence of Lys-105 is not certain.</text>
</comment>
<comment type="online information" name="Protein Spotlight">
    <link uri="https://www.proteinspotlight.org/back_issues/076"/>
    <text>Life shuttle - Issue 76 of November 2006</text>
</comment>
<keyword id="KW-0007">Acetylation</keyword>
<keyword id="KW-0903">Direct protein sequencing</keyword>
<keyword id="KW-1015">Disulfide bond</keyword>
<keyword id="KW-0249">Electron transport</keyword>
<keyword id="KW-0349">Heme</keyword>
<keyword id="KW-0408">Iron</keyword>
<keyword id="KW-0479">Metal-binding</keyword>
<keyword id="KW-0496">Mitochondrion</keyword>
<keyword id="KW-0679">Respiratory chain</keyword>
<keyword id="KW-0813">Transport</keyword>
<evidence type="ECO:0000255" key="1">
    <source>
        <dbReference type="PROSITE-ProRule" id="PRU00433"/>
    </source>
</evidence>
<evidence type="ECO:0000305" key="2"/>
<evidence type="ECO:0000305" key="3">
    <source ref="1"/>
</evidence>